<keyword id="KW-0012">Acyltransferase</keyword>
<keyword id="KW-0511">Multifunctional enzyme</keyword>
<keyword id="KW-0521">NADP</keyword>
<keyword id="KW-0560">Oxidoreductase</keyword>
<keyword id="KW-0596">Phosphopantetheine</keyword>
<keyword id="KW-0597">Phosphoprotein</keyword>
<keyword id="KW-1185">Reference proteome</keyword>
<keyword id="KW-0808">Transferase</keyword>
<reference key="1">
    <citation type="journal article" date="2013" name="PLoS Pathog.">
        <title>Deciphering the cryptic genome: genome-wide analyses of the rice pathogen Fusarium fujikuroi reveal complex regulation of secondary metabolism and novel metabolites.</title>
        <authorList>
            <person name="Wiemann P."/>
            <person name="Sieber C.M.K."/>
            <person name="von Bargen K.W."/>
            <person name="Studt L."/>
            <person name="Niehaus E.-M."/>
            <person name="Espino J.J."/>
            <person name="Huss K."/>
            <person name="Michielse C.B."/>
            <person name="Albermann S."/>
            <person name="Wagner D."/>
            <person name="Bergner S.V."/>
            <person name="Connolly L.R."/>
            <person name="Fischer A."/>
            <person name="Reuter G."/>
            <person name="Kleigrewe K."/>
            <person name="Bald T."/>
            <person name="Wingfield B.D."/>
            <person name="Ophir R."/>
            <person name="Freeman S."/>
            <person name="Hippler M."/>
            <person name="Smith K.M."/>
            <person name="Brown D.W."/>
            <person name="Proctor R.H."/>
            <person name="Muensterkoetter M."/>
            <person name="Freitag M."/>
            <person name="Humpf H.-U."/>
            <person name="Gueldener U."/>
            <person name="Tudzynski B."/>
        </authorList>
    </citation>
    <scope>NUCLEOTIDE SEQUENCE [LARGE SCALE GENOMIC DNA]</scope>
    <source>
        <strain>CBS 195.34 / IMI 58289 / NRRL A-6831</strain>
    </source>
</reference>
<reference key="2">
    <citation type="journal article" date="2006" name="Planta">
        <title>Fusaric acid induces apoptosis in saffron root-tip cells: roles of caspase-like activity, cytochrome c, and H2O2.</title>
        <authorList>
            <person name="Samadi L."/>
            <person name="Shahsavan Behboodi B."/>
        </authorList>
    </citation>
    <scope>BIOTECHNOLOGY</scope>
</reference>
<reference key="3">
    <citation type="journal article" date="2008" name="J. Appl. Microbiol.">
        <title>Bikaverin and fusaric acid from Fusarium oxysporum show antioomycete activity against Phytophthora infestans.</title>
        <authorList>
            <person name="Son S.W."/>
            <person name="Kim H.Y."/>
            <person name="Choi G.J."/>
            <person name="Lim H.K."/>
            <person name="Jang K.S."/>
            <person name="Lee S.O."/>
            <person name="Lee S."/>
            <person name="Sung N.D."/>
            <person name="Kim J.C."/>
        </authorList>
    </citation>
    <scope>BIOTECHNOLOGY</scope>
</reference>
<reference key="4">
    <citation type="journal article" date="2011" name="Arch. Pharm. Res.">
        <title>Antimycobacterial activity of fusaric acid from a mangrove endophyte and its metal complexes.</title>
        <authorList>
            <person name="Pan J.H."/>
            <person name="Chen Y."/>
            <person name="Huang Y.H."/>
            <person name="Tao Y.W."/>
            <person name="Wang J."/>
            <person name="Li Y."/>
            <person name="Peng Y."/>
            <person name="Dong T."/>
            <person name="Lai X.M."/>
            <person name="Lin Y.C."/>
        </authorList>
    </citation>
    <scope>BIOTECHNOLOGY</scope>
</reference>
<reference key="5">
    <citation type="journal article" date="2011" name="Toxicon">
        <title>Phytotoxicity of fusaric acid and analogs to cotton.</title>
        <authorList>
            <person name="Stipanovic R.D."/>
            <person name="Puckhaber L.S."/>
            <person name="Liu J."/>
            <person name="Bell A.A."/>
        </authorList>
    </citation>
    <scope>BIOTECHNOLOGY</scope>
</reference>
<reference key="6">
    <citation type="journal article" date="2012" name="Planta Med.">
        <title>In vitro acanthamoebicidal activity of fusaric acid and dehydrofusaric acid from an endophytic fungus Fusarium sp. Tlau3.</title>
        <authorList>
            <person name="Boonman N."/>
            <person name="Prachya S."/>
            <person name="Boonmee A."/>
            <person name="Kittakoop P."/>
            <person name="Wiyakrutta S."/>
            <person name="Sriubolmas N."/>
            <person name="Warit S."/>
            <person name="Dharmkrong-At Chusattayanond A."/>
        </authorList>
    </citation>
    <scope>BIOTECHNOLOGY</scope>
</reference>
<reference key="7">
    <citation type="journal article" date="2013" name="Planta">
        <title>Fusaric acid induction of programmed cell death modulated through nitric oxide signalling in tobacco suspension cells.</title>
        <authorList>
            <person name="Jiao J."/>
            <person name="Zhou B."/>
            <person name="Zhu X."/>
            <person name="Gao Z."/>
            <person name="Liang Y."/>
        </authorList>
    </citation>
    <scope>BIOTECHNOLOGY</scope>
</reference>
<reference key="8">
    <citation type="journal article" date="2013" name="PLoS ONE">
        <title>Contamination of bananas with beauvericin and fusaric acid produced by Fusarium oxysporum f. sp. cubense.</title>
        <authorList>
            <person name="Li C."/>
            <person name="Zuo C."/>
            <person name="Deng G."/>
            <person name="Kuang R."/>
            <person name="Yang Q."/>
            <person name="Hu C."/>
            <person name="Sheng O."/>
            <person name="Zhang S."/>
            <person name="Ma L."/>
            <person name="Wei Y."/>
            <person name="Yang J."/>
            <person name="Liu S."/>
            <person name="Biswas M.K."/>
            <person name="Viljoen A."/>
            <person name="Yi G."/>
        </authorList>
    </citation>
    <scope>BIOTECHNOLOGY</scope>
</reference>
<reference key="9">
    <citation type="journal article" date="2014" name="Appl. Microbiol. Biotechnol.">
        <title>Characterization of the fusaric acid gene cluster in Fusarium fujikuroi.</title>
        <authorList>
            <person name="Niehaus E.M."/>
            <person name="von Bargen K.W."/>
            <person name="Espino J.J."/>
            <person name="Pfannmueller A."/>
            <person name="Humpf H.U."/>
            <person name="Tudzynski B."/>
        </authorList>
    </citation>
    <scope>FUNCTION</scope>
    <scope>DISRUPTION PHENOTYPE</scope>
    <scope>INDUCTION</scope>
</reference>
<reference key="10">
    <citation type="journal article" date="2016" name="Environ. Microbiol.">
        <title>Two separate key enzymes and two pathway-specific transcription factors are involved in fusaric acid biosynthesis in Fusarium fujikuroi.</title>
        <authorList>
            <person name="Studt L."/>
            <person name="Janevska S."/>
            <person name="Niehaus E.M."/>
            <person name="Burkhardt I."/>
            <person name="Arndt B."/>
            <person name="Sieber C.M."/>
            <person name="Humpf H.U."/>
            <person name="Dickschat J.S."/>
            <person name="Tudzynski B."/>
        </authorList>
    </citation>
    <scope>FUNCTION</scope>
    <scope>DISRUPTION PHENOTYPE</scope>
    <scope>CATALYTIC ACTIVITY</scope>
</reference>
<name>FUB1_GIBF5</name>
<proteinExistence type="evidence at protein level"/>
<evidence type="ECO:0000255" key="1"/>
<evidence type="ECO:0000255" key="2">
    <source>
        <dbReference type="PROSITE-ProRule" id="PRU00258"/>
    </source>
</evidence>
<evidence type="ECO:0000255" key="3">
    <source>
        <dbReference type="PROSITE-ProRule" id="PRU01348"/>
    </source>
</evidence>
<evidence type="ECO:0000255" key="4">
    <source>
        <dbReference type="PROSITE-ProRule" id="PRU01363"/>
    </source>
</evidence>
<evidence type="ECO:0000255" key="5">
    <source>
        <dbReference type="PROSITE-ProRule" id="PRU10022"/>
    </source>
</evidence>
<evidence type="ECO:0000256" key="6">
    <source>
        <dbReference type="SAM" id="MobiDB-lite"/>
    </source>
</evidence>
<evidence type="ECO:0000269" key="7">
    <source>
    </source>
</evidence>
<evidence type="ECO:0000269" key="8">
    <source>
    </source>
</evidence>
<evidence type="ECO:0000269" key="9">
    <source>
    </source>
</evidence>
<evidence type="ECO:0000269" key="10">
    <source>
    </source>
</evidence>
<evidence type="ECO:0000269" key="11">
    <source>
    </source>
</evidence>
<evidence type="ECO:0000269" key="12">
    <source>
    </source>
</evidence>
<evidence type="ECO:0000269" key="13">
    <source>
    </source>
</evidence>
<evidence type="ECO:0000269" key="14">
    <source>
    </source>
</evidence>
<evidence type="ECO:0000269" key="15">
    <source>
    </source>
</evidence>
<evidence type="ECO:0000303" key="16">
    <source>
    </source>
</evidence>
<evidence type="ECO:0000305" key="17"/>
<evidence type="ECO:0000305" key="18">
    <source>
    </source>
</evidence>
<comment type="function">
    <text evidence="14 15">Reducing polyketide synthase; part of the gene cluster that mediates the biosynthesis of fusaric acid, a mycotoxin with low to moderate toxicity to animals and humans, but with high phytotoxic properties (PubMed:24389666, PubMed:26662839). L-aspartate is suggested as fusaric acid amino acid precursor that is activated and further processed to O-acetyl-L-homoserine by cluster enzymes aspartate kinase FUB3 and homoserine O-acetyltransferase FUB5, as well as enzymes of the primary metabolism (PubMed:26662839). The polyketide synthase (PKS) FUB1 generates the triketide trans-2-hexenal which is presumptively released by the hydrolase FUB4 and linked to the NRPS-bound amino acid precursor by NAD(P)-dependent dehydrogenase FUB6 (PubMed:26662839). FUB1, FUB4, and the non-canonical NRPS Fub8 may form an enzyme complex (PubMed:26662839). Further processing of the NRPS-bound intermediate might be carried out by FUB6 and the sulfhydrylase FUB7, enabling a spontaneous electrocyclization to close the carbon backbone of fusaric acid (PubMed:26662839). Dihydrofusaric acid is likely to be released via reduction by the thioester reductase (TR) domain of FUB8 whereupon the final oxidation to fusaric acid may (also) be performed by the FMN-dependent dehydrogenase FUB9 (PubMed:26662839).</text>
</comment>
<comment type="pathway">
    <text evidence="15">Mycotoxin biosynthesis.</text>
</comment>
<comment type="induction">
    <text evidence="14">Expressed under high amounts of nitrogen via regulation by AREB (PubMed:24389666). Moreover, components of the fungal-specific velvet complex VEL1 and LAE1 act also as positive regulators of expression (PubMed:24389666). Finally, the pH regulator PACC acts as activator of FUB expression after the pH shift to alkaline ambient conditions (PubMed:24389666).</text>
</comment>
<comment type="domain">
    <text evidence="17">Multidomain protein; including a starter unit:ACP transacylase (SAT) that selects the starter unit; a ketosynthase (KS) that catalyzes repeated decarboxylative condensation to elongate the polyketide backbone; a malonyl-CoA:ACP transacylase (MAT) that selects and transfers the extender unit malonyl-CoA; a product template (PT) domain that controls the immediate cyclization regioselectivity of the reactive polyketide backbone; and an acyl-carrier protein (ACP) that serves as the tether of the growing and completed polyketide via its phosphopantetheinyl arm.</text>
</comment>
<comment type="disruption phenotype">
    <text evidence="14 15">Impairs the production of fusaric acid (PubMed:24389666, PubMed:26662839).</text>
</comment>
<comment type="biotechnology">
    <text evidence="7 8 9 10 11 12 13">Fusaric acid is phytotoxic to plants such as cotton and banana (PubMed:20955724, PubMed:23922960). It has been shown to induce programmed cell death in plants (PubMed:16868776, PubMed:23838885). In addition to a mild toxicity to animals, fusaric acid exhibits acanthamoebicidal, antioomycete, and antimycobacterial activities (PubMed:17927749, PubMed:21811925, PubMed:22864988).</text>
</comment>
<gene>
    <name evidence="16" type="primary">FUB1</name>
    <name type="ORF">FFUJ_02105</name>
</gene>
<dbReference type="EC" id="2.3.1.-" evidence="18"/>
<dbReference type="EMBL" id="HF679025">
    <property type="protein sequence ID" value="CCT65184.1"/>
    <property type="molecule type" value="Genomic_DNA"/>
</dbReference>
<dbReference type="SMR" id="S0DRI1"/>
<dbReference type="STRING" id="1279085.S0DRI1"/>
<dbReference type="EnsemblFungi" id="CCT65184">
    <property type="protein sequence ID" value="CCT65184"/>
    <property type="gene ID" value="FFUJ_02105"/>
</dbReference>
<dbReference type="VEuPathDB" id="FungiDB:FFUJ_02105"/>
<dbReference type="HOGENOM" id="CLU_000022_31_0_1"/>
<dbReference type="BioCyc" id="MetaCyc:MONOMER-19342"/>
<dbReference type="Proteomes" id="UP000016800">
    <property type="component" value="Chromosome 3"/>
</dbReference>
<dbReference type="GO" id="GO:0004315">
    <property type="term" value="F:3-oxoacyl-[acyl-carrier-protein] synthase activity"/>
    <property type="evidence" value="ECO:0007669"/>
    <property type="project" value="InterPro"/>
</dbReference>
<dbReference type="GO" id="GO:0004312">
    <property type="term" value="F:fatty acid synthase activity"/>
    <property type="evidence" value="ECO:0007669"/>
    <property type="project" value="TreeGrafter"/>
</dbReference>
<dbReference type="GO" id="GO:0016491">
    <property type="term" value="F:oxidoreductase activity"/>
    <property type="evidence" value="ECO:0007669"/>
    <property type="project" value="UniProtKB-KW"/>
</dbReference>
<dbReference type="GO" id="GO:0031177">
    <property type="term" value="F:phosphopantetheine binding"/>
    <property type="evidence" value="ECO:0007669"/>
    <property type="project" value="InterPro"/>
</dbReference>
<dbReference type="GO" id="GO:0006633">
    <property type="term" value="P:fatty acid biosynthetic process"/>
    <property type="evidence" value="ECO:0007669"/>
    <property type="project" value="InterPro"/>
</dbReference>
<dbReference type="GO" id="GO:0030639">
    <property type="term" value="P:polyketide biosynthetic process"/>
    <property type="evidence" value="ECO:0007669"/>
    <property type="project" value="UniProtKB-ARBA"/>
</dbReference>
<dbReference type="CDD" id="cd05195">
    <property type="entry name" value="enoyl_red"/>
    <property type="match status" value="1"/>
</dbReference>
<dbReference type="CDD" id="cd05274">
    <property type="entry name" value="KR_FAS_SDR_x"/>
    <property type="match status" value="1"/>
</dbReference>
<dbReference type="CDD" id="cd00833">
    <property type="entry name" value="PKS"/>
    <property type="match status" value="1"/>
</dbReference>
<dbReference type="FunFam" id="3.40.50.720:FF:000209">
    <property type="entry name" value="Polyketide synthase Pks12"/>
    <property type="match status" value="1"/>
</dbReference>
<dbReference type="Gene3D" id="3.40.47.10">
    <property type="match status" value="1"/>
</dbReference>
<dbReference type="Gene3D" id="1.10.1200.10">
    <property type="entry name" value="ACP-like"/>
    <property type="match status" value="1"/>
</dbReference>
<dbReference type="Gene3D" id="3.40.366.10">
    <property type="entry name" value="Malonyl-Coenzyme A Acyl Carrier Protein, domain 2"/>
    <property type="match status" value="1"/>
</dbReference>
<dbReference type="Gene3D" id="3.90.180.10">
    <property type="entry name" value="Medium-chain alcohol dehydrogenases, catalytic domain"/>
    <property type="match status" value="1"/>
</dbReference>
<dbReference type="Gene3D" id="3.40.50.720">
    <property type="entry name" value="NAD(P)-binding Rossmann-like Domain"/>
    <property type="match status" value="1"/>
</dbReference>
<dbReference type="Gene3D" id="3.10.129.110">
    <property type="entry name" value="Polyketide synthase dehydratase"/>
    <property type="match status" value="1"/>
</dbReference>
<dbReference type="Gene3D" id="3.40.50.150">
    <property type="entry name" value="Vaccinia Virus protein VP39"/>
    <property type="match status" value="1"/>
</dbReference>
<dbReference type="InterPro" id="IPR001227">
    <property type="entry name" value="Ac_transferase_dom_sf"/>
</dbReference>
<dbReference type="InterPro" id="IPR036736">
    <property type="entry name" value="ACP-like_sf"/>
</dbReference>
<dbReference type="InterPro" id="IPR014043">
    <property type="entry name" value="Acyl_transferase_dom"/>
</dbReference>
<dbReference type="InterPro" id="IPR016035">
    <property type="entry name" value="Acyl_Trfase/lysoPLipase"/>
</dbReference>
<dbReference type="InterPro" id="IPR013149">
    <property type="entry name" value="ADH-like_C"/>
</dbReference>
<dbReference type="InterPro" id="IPR013154">
    <property type="entry name" value="ADH-like_N"/>
</dbReference>
<dbReference type="InterPro" id="IPR011032">
    <property type="entry name" value="GroES-like_sf"/>
</dbReference>
<dbReference type="InterPro" id="IPR018201">
    <property type="entry name" value="Ketoacyl_synth_AS"/>
</dbReference>
<dbReference type="InterPro" id="IPR014031">
    <property type="entry name" value="Ketoacyl_synth_C"/>
</dbReference>
<dbReference type="InterPro" id="IPR014030">
    <property type="entry name" value="Ketoacyl_synth_N"/>
</dbReference>
<dbReference type="InterPro" id="IPR016036">
    <property type="entry name" value="Malonyl_transacylase_ACP-bd"/>
</dbReference>
<dbReference type="InterPro" id="IPR036291">
    <property type="entry name" value="NAD(P)-bd_dom_sf"/>
</dbReference>
<dbReference type="InterPro" id="IPR056501">
    <property type="entry name" value="NAD-bd_HRPKS_sdrA"/>
</dbReference>
<dbReference type="InterPro" id="IPR032821">
    <property type="entry name" value="PKS_assoc"/>
</dbReference>
<dbReference type="InterPro" id="IPR020841">
    <property type="entry name" value="PKS_Beta-ketoAc_synthase_dom"/>
</dbReference>
<dbReference type="InterPro" id="IPR042104">
    <property type="entry name" value="PKS_dehydratase_sf"/>
</dbReference>
<dbReference type="InterPro" id="IPR020807">
    <property type="entry name" value="PKS_DH"/>
</dbReference>
<dbReference type="InterPro" id="IPR049551">
    <property type="entry name" value="PKS_DH_C"/>
</dbReference>
<dbReference type="InterPro" id="IPR049552">
    <property type="entry name" value="PKS_DH_N"/>
</dbReference>
<dbReference type="InterPro" id="IPR020843">
    <property type="entry name" value="PKS_ER"/>
</dbReference>
<dbReference type="InterPro" id="IPR013968">
    <property type="entry name" value="PKS_KR"/>
</dbReference>
<dbReference type="InterPro" id="IPR049900">
    <property type="entry name" value="PKS_mFAS_DH"/>
</dbReference>
<dbReference type="InterPro" id="IPR050091">
    <property type="entry name" value="PKS_NRPS_Biosynth_Enz"/>
</dbReference>
<dbReference type="InterPro" id="IPR020806">
    <property type="entry name" value="PKS_PP-bd"/>
</dbReference>
<dbReference type="InterPro" id="IPR009081">
    <property type="entry name" value="PP-bd_ACP"/>
</dbReference>
<dbReference type="InterPro" id="IPR006162">
    <property type="entry name" value="Ppantetheine_attach_site"/>
</dbReference>
<dbReference type="InterPro" id="IPR029063">
    <property type="entry name" value="SAM-dependent_MTases_sf"/>
</dbReference>
<dbReference type="InterPro" id="IPR016039">
    <property type="entry name" value="Thiolase-like"/>
</dbReference>
<dbReference type="PANTHER" id="PTHR43775:SF29">
    <property type="entry name" value="ASPERFURANONE POLYKETIDE SYNTHASE AFOG-RELATED"/>
    <property type="match status" value="1"/>
</dbReference>
<dbReference type="PANTHER" id="PTHR43775">
    <property type="entry name" value="FATTY ACID SYNTHASE"/>
    <property type="match status" value="1"/>
</dbReference>
<dbReference type="Pfam" id="PF00698">
    <property type="entry name" value="Acyl_transf_1"/>
    <property type="match status" value="1"/>
</dbReference>
<dbReference type="Pfam" id="PF08240">
    <property type="entry name" value="ADH_N"/>
    <property type="match status" value="1"/>
</dbReference>
<dbReference type="Pfam" id="PF00107">
    <property type="entry name" value="ADH_zinc_N"/>
    <property type="match status" value="1"/>
</dbReference>
<dbReference type="Pfam" id="PF16197">
    <property type="entry name" value="KAsynt_C_assoc"/>
    <property type="match status" value="1"/>
</dbReference>
<dbReference type="Pfam" id="PF00109">
    <property type="entry name" value="ketoacyl-synt"/>
    <property type="match status" value="1"/>
</dbReference>
<dbReference type="Pfam" id="PF02801">
    <property type="entry name" value="Ketoacyl-synt_C"/>
    <property type="match status" value="1"/>
</dbReference>
<dbReference type="Pfam" id="PF08659">
    <property type="entry name" value="KR"/>
    <property type="match status" value="1"/>
</dbReference>
<dbReference type="Pfam" id="PF23114">
    <property type="entry name" value="NAD-bd_HRPKS_sdrA"/>
    <property type="match status" value="1"/>
</dbReference>
<dbReference type="Pfam" id="PF21089">
    <property type="entry name" value="PKS_DH_N"/>
    <property type="match status" value="1"/>
</dbReference>
<dbReference type="Pfam" id="PF00550">
    <property type="entry name" value="PP-binding"/>
    <property type="match status" value="1"/>
</dbReference>
<dbReference type="Pfam" id="PF14765">
    <property type="entry name" value="PS-DH"/>
    <property type="match status" value="1"/>
</dbReference>
<dbReference type="SMART" id="SM00827">
    <property type="entry name" value="PKS_AT"/>
    <property type="match status" value="1"/>
</dbReference>
<dbReference type="SMART" id="SM00826">
    <property type="entry name" value="PKS_DH"/>
    <property type="match status" value="1"/>
</dbReference>
<dbReference type="SMART" id="SM00829">
    <property type="entry name" value="PKS_ER"/>
    <property type="match status" value="1"/>
</dbReference>
<dbReference type="SMART" id="SM00822">
    <property type="entry name" value="PKS_KR"/>
    <property type="match status" value="1"/>
</dbReference>
<dbReference type="SMART" id="SM00825">
    <property type="entry name" value="PKS_KS"/>
    <property type="match status" value="1"/>
</dbReference>
<dbReference type="SMART" id="SM00823">
    <property type="entry name" value="PKS_PP"/>
    <property type="match status" value="1"/>
</dbReference>
<dbReference type="SUPFAM" id="SSF47336">
    <property type="entry name" value="ACP-like"/>
    <property type="match status" value="1"/>
</dbReference>
<dbReference type="SUPFAM" id="SSF52151">
    <property type="entry name" value="FabD/lysophospholipase-like"/>
    <property type="match status" value="1"/>
</dbReference>
<dbReference type="SUPFAM" id="SSF50129">
    <property type="entry name" value="GroES-like"/>
    <property type="match status" value="1"/>
</dbReference>
<dbReference type="SUPFAM" id="SSF51735">
    <property type="entry name" value="NAD(P)-binding Rossmann-fold domains"/>
    <property type="match status" value="2"/>
</dbReference>
<dbReference type="SUPFAM" id="SSF55048">
    <property type="entry name" value="Probable ACP-binding domain of malonyl-CoA ACP transacylase"/>
    <property type="match status" value="1"/>
</dbReference>
<dbReference type="SUPFAM" id="SSF53335">
    <property type="entry name" value="S-adenosyl-L-methionine-dependent methyltransferases"/>
    <property type="match status" value="1"/>
</dbReference>
<dbReference type="SUPFAM" id="SSF53901">
    <property type="entry name" value="Thiolase-like"/>
    <property type="match status" value="1"/>
</dbReference>
<dbReference type="PROSITE" id="PS50075">
    <property type="entry name" value="CARRIER"/>
    <property type="match status" value="1"/>
</dbReference>
<dbReference type="PROSITE" id="PS00606">
    <property type="entry name" value="KS3_1"/>
    <property type="match status" value="1"/>
</dbReference>
<dbReference type="PROSITE" id="PS52004">
    <property type="entry name" value="KS3_2"/>
    <property type="match status" value="1"/>
</dbReference>
<dbReference type="PROSITE" id="PS00012">
    <property type="entry name" value="PHOSPHOPANTETHEINE"/>
    <property type="match status" value="1"/>
</dbReference>
<dbReference type="PROSITE" id="PS52019">
    <property type="entry name" value="PKS_MFAS_DH"/>
    <property type="match status" value="1"/>
</dbReference>
<sequence>MTLSNGSNGANGTSNGNGAHPSANGFHNAANGGANNGSANGGAEHDAGRPQVDGDISSAIAVIGVSGRFPGDATSPRHLWDLLKEGRNALSDVPESRFNIDGFYHPDGGRAGTLNTKQGYFLKSDVDKFDAGFFSITPEEARGMDPTQRILLELAYEGLENAGLKIDEVANQHMSCYIGACQHDYWDLQAYDMDSAPKYTATGTGPALLSNRISWFFNLKGPSVTIDTACSSTLTALHLAGQSIRNGESDSALVGGLGLHLLPNFGVFMSSMSFLSADNKCHSFDASANGYARAEGGGFVVLKRLDKALADGDTIRAVLRSTGSNQDGRTLGITQPSASRQEELIRATYASAGLSFDKTNLFEAHGTGTKVGDPIECSVIGNVFGKTREKPVYVGSVKSNIGHLEGASGLAGLVKTIYSLESGVISPTYGLEHVNPKIKLDEWKINIPTEEIKWPAGLRRASINSFGYGGANAHAVLDDAYHFLKTHNLKGHHNTKVEGVLNTGLIANGSQDVIEGTDKKSHLFLLSSHEESGIARLSQTLQAYLAETSARKLPEDQFLHRLAYTLSEKRSALPWKTYAAASTIEELQQALDGAPAKAARVPRSQALTFIFTGQGAQWFAMGRELQKYPVFQQSLHACSQYLKDFGSTWDLVEELNRDAKESIIDLPYVSQPSCTALQLSIIDLLASWGIHPQVTVGHSSGEIAAAYAKGAFDKEAAMRIAYFRGHLTGNITKTGSMAAVGLGPDRVSEYMSRVTAGKIVIACINSPASVTLSGDVEGIDEVLTFLQADDIFARKLRVTTAYHSHHMQQISEEYLNSLSGKWELKPGNPKVRMFSSVSAKAIDGTELGPAYWVANLVSPVNFSGAVTAAANAGALGKRKTSGKKGSADAMVEIGPHAALQGPLKQILDSIGDKGASPKYFSAIKRKQDAIQTTLEVVGELLVLGHQVNIPLANTYTETTSALVDLPPYAWNTANSYWHESAAVTAYKQRKHPRLELLGVRDPRSTKAEPAWHNYLRISEQPWIEHHQFQNTNIYPMAGMIVMAIEGLRQVETRADVEGYTIRDVNIGSALVVPPDQTVETRLQLTPWRSGPNVSWSHWTEFTVSSRNESGSWTTNCTGLVSTSYKHDTNSTFLDEEAAANALLNQEYKDISKSDLPSVDPTVFYTKLDESGFSLGPAFRGVKELNLFDHKAHFSMEVIDTKEFYPKKWEPAHLIHPAVLDVFVHLLISSTGDAAEIKARVPVSTASLYISADFDSTGGTKYHGFSTSKKHGATNMLSDVIAFAEGGSKALIALKGCKTVPLRGASDSSSGDGQPLGHVPVVPKKVVDVEISDAATLGQLLTGTDLASKLASYLSLLGQKRPGLRVLEYSSSTSSTLLKALTAQAEDLQGSLSSVALTTPLDGPADELTSVPETWKNKVRQEKLDLAQDPSTQGFEDVALDVIILDVEDQQGDISLVLKNAKKVLKPSGILLIANHTAAISTDLLTSTGFTSTTVSDLIIARHKPETEPPVRRVLVVTPSTTSPGLGRLITQAESDLTSRGYEVAKTDFGSIPEQATPFLTLSALDIDAPFLEGFHHETFAKLRSLFLASRGTLWLTLDTASRGLVNGLGRTIRAEHPDISFTTLGLDASAALDSASNTKTISSIIDNISRKTFGETSDSEYVIRDNQVLIERLIPNPGLKALLDSSKTGNKLSAVKIPLKQVAKPLQLSIRDHGLLDTLEYLSVPDLPEPLGDNQIEIEVGSVGLNFRDVMVAMGQMEDSTLGIECAGVVVKVGAGVQKFKVGDRVFGMHAGCFQTRVRVDPRTFQRTPDNLGDEEAASLMCTSATVVHSLIDVARLQRGESVLIHSAAGGVGQTAIRLAKHLGAEIFATVSSEKKKRLLVEEYGIKESHIFNSRDYSFADGILRLTNQRGVDVVINSLAGEALRRTWLCVAPFGRFIELGKRDIYDNSGLDMRPFLDNITFSGLDILTQVISYPDRFEAIGNQVVELLSKNAISPLNNLARYSFGEVSKAFRLMQSGGHVGKIVLYPRPDDIVPVVPDGLESFCLPHDATYVLIGGLGGIGRSVTRLLVQRGARHLVFLSRSAASRPEAQALLDEVHAQGVQAKAFAVDVAEKSQLEPVINDVKQSFPAIKGLIHCAMDLRDAVYSNMTADDWNASLRPKLLATRNLHDLLPTDLDFFICLSSIAGIIGSRGQANYNAGNTYQDALAHQRAASGLAATSINLSLVVGIGVSTERSEVFQLLKDGGLLGMDENDVLNIIKAAISGRTPTQVALGASTGGQLDKLAANDPYWFADSRFAVLNQLDRQGTGAVAGGQDWKKLIAAAASPDEVYEIVLQQLLEGVSKIIKADVEDMDSRRSLPALGIDSLVAIEIRTWLLKEFQADLSVFDIVSNDPLTGFTKKVMAKSALIA</sequence>
<accession>S0DRI1</accession>
<feature type="chain" id="PRO_0000437307" description="Reducing polyketide synthase FUB1">
    <location>
        <begin position="1"/>
        <end position="2410"/>
    </location>
</feature>
<feature type="domain" description="Ketosynthase family 3 (KS3)" evidence="3">
    <location>
        <begin position="57"/>
        <end position="479"/>
    </location>
</feature>
<feature type="domain" description="PKS/mFAS DH" evidence="4">
    <location>
        <begin position="994"/>
        <end position="1307"/>
    </location>
</feature>
<feature type="domain" description="Carrier" evidence="2">
    <location>
        <begin position="2329"/>
        <end position="2406"/>
    </location>
</feature>
<feature type="region of interest" description="Disordered" evidence="6">
    <location>
        <begin position="1"/>
        <end position="52"/>
    </location>
</feature>
<feature type="region of interest" description="Malonyl-CoA:ACP transacylase (MAT) domain" evidence="1">
    <location>
        <begin position="608"/>
        <end position="929"/>
    </location>
</feature>
<feature type="region of interest" description="N-terminal hotdog fold" evidence="4">
    <location>
        <begin position="994"/>
        <end position="1127"/>
    </location>
</feature>
<feature type="region of interest" description="Dehydratase (DH) domain" evidence="1">
    <location>
        <begin position="995"/>
        <end position="1302"/>
    </location>
</feature>
<feature type="region of interest" description="C-terminal hotdog fold" evidence="4">
    <location>
        <begin position="1155"/>
        <end position="1307"/>
    </location>
</feature>
<feature type="region of interest" description="Enoyl reductase (ER) domain" evidence="1">
    <location>
        <begin position="1714"/>
        <end position="2026"/>
    </location>
</feature>
<feature type="region of interest" description="Ketoreductase (KR) domain" evidence="1">
    <location>
        <begin position="2050"/>
        <end position="2226"/>
    </location>
</feature>
<feature type="compositionally biased region" description="Low complexity" evidence="6">
    <location>
        <begin position="1"/>
        <end position="42"/>
    </location>
</feature>
<feature type="active site" description="For beta-ketoacyl synthase activity" evidence="3">
    <location>
        <position position="230"/>
    </location>
</feature>
<feature type="active site" description="For beta-ketoacyl synthase activity" evidence="3">
    <location>
        <position position="365"/>
    </location>
</feature>
<feature type="active site" description="For beta-ketoacyl synthase activity" evidence="3">
    <location>
        <position position="403"/>
    </location>
</feature>
<feature type="active site" description="For malonyltransferase activity" evidence="5">
    <location>
        <position position="699"/>
    </location>
</feature>
<feature type="active site" description="Proton acceptor; for dehydratase activity" evidence="4">
    <location>
        <position position="1026"/>
    </location>
</feature>
<feature type="active site" description="Proton donor; for dehydratase activity" evidence="4">
    <location>
        <position position="1220"/>
    </location>
</feature>
<feature type="modified residue" description="O-(pantetheine 4'-phosphoryl)serine" evidence="2">
    <location>
        <position position="2366"/>
    </location>
</feature>
<protein>
    <recommendedName>
        <fullName evidence="16">Reducing polyketide synthase FUB1</fullName>
        <ecNumber evidence="18">2.3.1.-</ecNumber>
    </recommendedName>
    <alternativeName>
        <fullName evidence="16">Fusaric acid biosynthesis protein 1</fullName>
    </alternativeName>
</protein>
<organism>
    <name type="scientific">Gibberella fujikuroi (strain CBS 195.34 / IMI 58289 / NRRL A-6831)</name>
    <name type="common">Bakanae and foot rot disease fungus</name>
    <name type="synonym">Fusarium fujikuroi</name>
    <dbReference type="NCBI Taxonomy" id="1279085"/>
    <lineage>
        <taxon>Eukaryota</taxon>
        <taxon>Fungi</taxon>
        <taxon>Dikarya</taxon>
        <taxon>Ascomycota</taxon>
        <taxon>Pezizomycotina</taxon>
        <taxon>Sordariomycetes</taxon>
        <taxon>Hypocreomycetidae</taxon>
        <taxon>Hypocreales</taxon>
        <taxon>Nectriaceae</taxon>
        <taxon>Fusarium</taxon>
        <taxon>Fusarium fujikuroi species complex</taxon>
    </lineage>
</organism>